<protein>
    <recommendedName>
        <fullName>ADP-ribosylation factor GTPase-activating protein AGD1</fullName>
        <shortName>ARF GAP AGD1</shortName>
    </recommendedName>
    <alternativeName>
        <fullName>Protein ARF-GAP DOMAIN 1</fullName>
        <shortName>AtAGD1</shortName>
    </alternativeName>
</protein>
<keyword id="KW-0040">ANK repeat</keyword>
<keyword id="KW-0175">Coiled coil</keyword>
<keyword id="KW-0967">Endosome</keyword>
<keyword id="KW-0343">GTPase activation</keyword>
<keyword id="KW-0479">Metal-binding</keyword>
<keyword id="KW-0597">Phosphoprotein</keyword>
<keyword id="KW-1185">Reference proteome</keyword>
<keyword id="KW-0677">Repeat</keyword>
<keyword id="KW-0813">Transport</keyword>
<keyword id="KW-0862">Zinc</keyword>
<keyword id="KW-0863">Zinc-finger</keyword>
<reference key="1">
    <citation type="journal article" date="2008" name="Plant Physiol.">
        <title>A class one ADP-ribosylation factor GTPase-activating protein is critical for maintaining directional root hair growth in Arabidopsis thaliana.</title>
        <authorList>
            <person name="Yoo C.-M."/>
            <person name="Wen J."/>
            <person name="Motes C.M."/>
            <person name="Sparks J.A."/>
            <person name="Blancaflor E.B."/>
        </authorList>
    </citation>
    <scope>NUCLEOTIDE SEQUENCE [MRNA]</scope>
    <scope>FUNCTION</scope>
    <scope>DISRUPTION PHENOTYPE</scope>
    <scope>SUBCELLULAR LOCATION</scope>
</reference>
<reference key="2">
    <citation type="journal article" date="1998" name="DNA Res.">
        <title>Structural analysis of Arabidopsis thaliana chromosome 5. VII. Sequence features of the regions of 1,013,767 bp covered by sixteen physically assigned P1 and TAC clones.</title>
        <authorList>
            <person name="Nakamura Y."/>
            <person name="Sato S."/>
            <person name="Asamizu E."/>
            <person name="Kaneko T."/>
            <person name="Kotani H."/>
            <person name="Miyajima N."/>
            <person name="Tabata S."/>
        </authorList>
    </citation>
    <scope>NUCLEOTIDE SEQUENCE [LARGE SCALE GENOMIC DNA]</scope>
    <source>
        <strain>cv. Columbia</strain>
    </source>
</reference>
<reference key="3">
    <citation type="journal article" date="2000" name="DNA Res.">
        <title>Structural analysis of Arabidopsis thaliana chromosome 5. X. Sequence features of the regions of 3,076,755 bp covered by sixty P1 and TAC clones.</title>
        <authorList>
            <person name="Sato S."/>
            <person name="Nakamura Y."/>
            <person name="Kaneko T."/>
            <person name="Katoh T."/>
            <person name="Asamizu E."/>
            <person name="Kotani H."/>
            <person name="Tabata S."/>
        </authorList>
    </citation>
    <scope>NUCLEOTIDE SEQUENCE [LARGE SCALE GENOMIC DNA]</scope>
    <source>
        <strain>cv. Columbia</strain>
    </source>
</reference>
<reference key="4">
    <citation type="journal article" date="2017" name="Plant J.">
        <title>Araport11: a complete reannotation of the Arabidopsis thaliana reference genome.</title>
        <authorList>
            <person name="Cheng C.Y."/>
            <person name="Krishnakumar V."/>
            <person name="Chan A.P."/>
            <person name="Thibaud-Nissen F."/>
            <person name="Schobel S."/>
            <person name="Town C.D."/>
        </authorList>
    </citation>
    <scope>GENOME REANNOTATION</scope>
    <source>
        <strain>cv. Columbia</strain>
    </source>
</reference>
<reference key="5">
    <citation type="journal article" date="2003" name="Plant Physiol.">
        <title>Analysis of the small GTPase gene superfamily of Arabidopsis.</title>
        <authorList>
            <person name="Vernoud V."/>
            <person name="Horton A.C."/>
            <person name="Yang Z."/>
            <person name="Nielsen E."/>
        </authorList>
    </citation>
    <scope>GENE FAMILY</scope>
    <scope>NOMENCLATURE</scope>
</reference>
<reference key="6">
    <citation type="journal article" date="2006" name="Plant Cell">
        <title>SCARFACE encodes an ARF-GAP that is required for normal auxin efflux and vein patterning in Arabidopsis.</title>
        <authorList>
            <person name="Sieburth L.E."/>
            <person name="Muday G.K."/>
            <person name="King E.J."/>
            <person name="Benton G."/>
            <person name="Kim S."/>
            <person name="Metcalf K.E."/>
            <person name="Meyers L."/>
            <person name="Seamen E."/>
            <person name="Van Norman J.M."/>
        </authorList>
    </citation>
    <scope>TISSUE SPECIFICITY</scope>
</reference>
<gene>
    <name type="primary">AGD1</name>
    <name type="ordered locus">At5g61980</name>
    <name type="ORF">K22G18.9</name>
</gene>
<accession>Q9FIT8</accession>
<evidence type="ECO:0000250" key="1"/>
<evidence type="ECO:0000250" key="2">
    <source>
        <dbReference type="UniProtKB" id="Q5W7F2"/>
    </source>
</evidence>
<evidence type="ECO:0000255" key="3"/>
<evidence type="ECO:0000255" key="4">
    <source>
        <dbReference type="PROSITE-ProRule" id="PRU00145"/>
    </source>
</evidence>
<evidence type="ECO:0000255" key="5">
    <source>
        <dbReference type="PROSITE-ProRule" id="PRU00288"/>
    </source>
</evidence>
<evidence type="ECO:0000256" key="6">
    <source>
        <dbReference type="SAM" id="MobiDB-lite"/>
    </source>
</evidence>
<evidence type="ECO:0000269" key="7">
    <source>
    </source>
</evidence>
<evidence type="ECO:0000269" key="8">
    <source>
    </source>
</evidence>
<evidence type="ECO:0000305" key="9"/>
<proteinExistence type="evidence at transcript level"/>
<organism>
    <name type="scientific">Arabidopsis thaliana</name>
    <name type="common">Mouse-ear cress</name>
    <dbReference type="NCBI Taxonomy" id="3702"/>
    <lineage>
        <taxon>Eukaryota</taxon>
        <taxon>Viridiplantae</taxon>
        <taxon>Streptophyta</taxon>
        <taxon>Embryophyta</taxon>
        <taxon>Tracheophyta</taxon>
        <taxon>Spermatophyta</taxon>
        <taxon>Magnoliopsida</taxon>
        <taxon>eudicotyledons</taxon>
        <taxon>Gunneridae</taxon>
        <taxon>Pentapetalae</taxon>
        <taxon>rosids</taxon>
        <taxon>malvids</taxon>
        <taxon>Brassicales</taxon>
        <taxon>Brassicaceae</taxon>
        <taxon>Camelineae</taxon>
        <taxon>Arabidopsis</taxon>
    </lineage>
</organism>
<sequence>MHFAKLDDSPMFRQQMQSMEESAELLRLRCLRFYKGCRKYTEGLGEGYDADIGFVNALESFGGGHNDPVCVAFGGPVMTKFTIALREIGTYKEVLRSQVEHMLSDRLLQFVNGDVHEVKEARKRFDKATITYDQAREKYLSLRKSTRLDVAATIEEDLHSARTTFEQARFHLVSALSNAESKKRFEFLEAVSGTMDAHLRFFKQGYELLHQMEPFINQVLAYAHQSRECANYEMASLNERMQEYQRQVDRETRNSCVSPTGDGMRHNSRNSQKVIEAVMQSAAKGKVQTIRQGYLSKRSSNLRGDWKRRFFILDSRGMLYYYRKPWNWSSGNGSRSVVHRNMASENSPGLLSRWLSSHYHGGVHDEKPVARHTVNLLTSTIKVDADQTDLRFCFRIISPTKVYTLQAENAQDQMDWIEKITGVIASLLSFQTPERAIMRLSTVDGGDTFSASDSGSLADPYDIEQAESGESTVEHPMTGGNRSRFSGCLQQHDMVKTEKPIDVLTRVLGNERCADCGAPEPDWASLNLGVLICIECSGIHRNLGVHISKVRSLTLDVKVWEPSVLTLFQSLGNVYVNSVWEELLNSESRTSSASRSSGTPKSDRPRKLLVRKPGFNDPISVKELFIHAKYSERIFVRKAIDSQHFQAVFQEIWENVRANDKKSVYRHIVCSEADVNALRGQASYTVSLPLSKMMQMEETLEAKFKSIEEEFQENPAGYSNSRGDGESMVREETSNDCSLLHLACLSADIGMVELLLQYGAKINATDSKGRTPLHHCIISRRYAIARLLLMRGGDPNAVDKDSNIPVKYASQTDLNDSELIALLTDSKR</sequence>
<comment type="function">
    <text evidence="1 8">Probable GTPase-activating protein (By similarity). Regulator of membrane trafficking. Required for maintaining a straight growth of root hairs.</text>
</comment>
<comment type="subcellular location">
    <subcellularLocation>
        <location evidence="8">Endosome</location>
    </subcellularLocation>
</comment>
<comment type="tissue specificity">
    <text evidence="7">Expressed in roots, but not in hypocotyls or cotyledons. Low levels detected in leaf and shoot apical meristems and in siliques.</text>
</comment>
<comment type="disruption phenotype">
    <text evidence="8">Wavy root hair phenotype.</text>
</comment>
<comment type="sequence caution" evidence="9">
    <conflict type="erroneous gene model prediction">
        <sequence resource="EMBL-CDS" id="BAB10160"/>
    </conflict>
</comment>
<dbReference type="EMBL" id="AB016880">
    <property type="protein sequence ID" value="BAB10160.1"/>
    <property type="status" value="ALT_SEQ"/>
    <property type="molecule type" value="Genomic_DNA"/>
</dbReference>
<dbReference type="EMBL" id="AB022212">
    <property type="protein sequence ID" value="BAB10160.1"/>
    <property type="status" value="JOINED"/>
    <property type="molecule type" value="Genomic_DNA"/>
</dbReference>
<dbReference type="EMBL" id="CP002688">
    <property type="protein sequence ID" value="AED97545.1"/>
    <property type="molecule type" value="Genomic_DNA"/>
</dbReference>
<dbReference type="RefSeq" id="NP_201004.2">
    <property type="nucleotide sequence ID" value="NM_125591.3"/>
</dbReference>
<dbReference type="SMR" id="Q9FIT8"/>
<dbReference type="FunCoup" id="Q9FIT8">
    <property type="interactions" value="2002"/>
</dbReference>
<dbReference type="STRING" id="3702.Q9FIT8"/>
<dbReference type="PaxDb" id="3702-AT5G61980.1"/>
<dbReference type="ProteomicsDB" id="244906"/>
<dbReference type="EnsemblPlants" id="AT5G61980.1">
    <property type="protein sequence ID" value="AT5G61980.1"/>
    <property type="gene ID" value="AT5G61980"/>
</dbReference>
<dbReference type="GeneID" id="836319"/>
<dbReference type="Gramene" id="AT5G61980.1">
    <property type="protein sequence ID" value="AT5G61980.1"/>
    <property type="gene ID" value="AT5G61980"/>
</dbReference>
<dbReference type="KEGG" id="ath:AT5G61980"/>
<dbReference type="Araport" id="AT5G61980"/>
<dbReference type="TAIR" id="AT5G61980">
    <property type="gene designation" value="AGD1"/>
</dbReference>
<dbReference type="eggNOG" id="KOG0521">
    <property type="taxonomic scope" value="Eukaryota"/>
</dbReference>
<dbReference type="HOGENOM" id="CLU_016029_1_0_1"/>
<dbReference type="InParanoid" id="Q9FIT8"/>
<dbReference type="OMA" id="SMDEIQL"/>
<dbReference type="PhylomeDB" id="Q9FIT8"/>
<dbReference type="PRO" id="PR:Q9FIT8"/>
<dbReference type="Proteomes" id="UP000006548">
    <property type="component" value="Chromosome 5"/>
</dbReference>
<dbReference type="ExpressionAtlas" id="Q9FIT8">
    <property type="expression patterns" value="baseline and differential"/>
</dbReference>
<dbReference type="GO" id="GO:0030139">
    <property type="term" value="C:endocytic vesicle"/>
    <property type="evidence" value="ECO:0000314"/>
    <property type="project" value="TAIR"/>
</dbReference>
<dbReference type="GO" id="GO:0005768">
    <property type="term" value="C:endosome"/>
    <property type="evidence" value="ECO:0007669"/>
    <property type="project" value="UniProtKB-SubCell"/>
</dbReference>
<dbReference type="GO" id="GO:0005886">
    <property type="term" value="C:plasma membrane"/>
    <property type="evidence" value="ECO:0000314"/>
    <property type="project" value="TAIR"/>
</dbReference>
<dbReference type="GO" id="GO:0035618">
    <property type="term" value="C:root hair"/>
    <property type="evidence" value="ECO:0000314"/>
    <property type="project" value="TAIR"/>
</dbReference>
<dbReference type="GO" id="GO:0005096">
    <property type="term" value="F:GTPase activator activity"/>
    <property type="evidence" value="ECO:0007669"/>
    <property type="project" value="UniProtKB-KW"/>
</dbReference>
<dbReference type="GO" id="GO:0008270">
    <property type="term" value="F:zinc ion binding"/>
    <property type="evidence" value="ECO:0007669"/>
    <property type="project" value="UniProtKB-KW"/>
</dbReference>
<dbReference type="GO" id="GO:0007010">
    <property type="term" value="P:cytoskeleton organization"/>
    <property type="evidence" value="ECO:0000315"/>
    <property type="project" value="TAIR"/>
</dbReference>
<dbReference type="GO" id="GO:0048768">
    <property type="term" value="P:root hair cell tip growth"/>
    <property type="evidence" value="ECO:0000315"/>
    <property type="project" value="TAIR"/>
</dbReference>
<dbReference type="CDD" id="cd08204">
    <property type="entry name" value="ArfGap"/>
    <property type="match status" value="1"/>
</dbReference>
<dbReference type="CDD" id="cd07606">
    <property type="entry name" value="BAR_SFC_plant"/>
    <property type="match status" value="1"/>
</dbReference>
<dbReference type="CDD" id="cd13250">
    <property type="entry name" value="PH_ACAP"/>
    <property type="match status" value="1"/>
</dbReference>
<dbReference type="FunFam" id="1.10.220.150:FF:000019">
    <property type="entry name" value="ADP-ribosylation factor GTPase-activating protein AGD1"/>
    <property type="match status" value="1"/>
</dbReference>
<dbReference type="FunFam" id="1.25.40.20:FF:000513">
    <property type="entry name" value="ADP-ribosylation factor GTPase-activating protein AGD1"/>
    <property type="match status" value="1"/>
</dbReference>
<dbReference type="FunFam" id="1.20.1270.60:FF:000080">
    <property type="entry name" value="ADP-ribosylation factor GTPase-activating protein AGD3"/>
    <property type="match status" value="1"/>
</dbReference>
<dbReference type="Gene3D" id="1.25.40.20">
    <property type="entry name" value="Ankyrin repeat-containing domain"/>
    <property type="match status" value="1"/>
</dbReference>
<dbReference type="Gene3D" id="1.10.220.150">
    <property type="entry name" value="Arf GTPase activating protein"/>
    <property type="match status" value="1"/>
</dbReference>
<dbReference type="Gene3D" id="1.20.1270.60">
    <property type="entry name" value="Arfaptin homology (AH) domain/BAR domain"/>
    <property type="match status" value="1"/>
</dbReference>
<dbReference type="Gene3D" id="2.30.29.30">
    <property type="entry name" value="Pleckstrin-homology domain (PH domain)/Phosphotyrosine-binding domain (PTB)"/>
    <property type="match status" value="1"/>
</dbReference>
<dbReference type="InterPro" id="IPR045258">
    <property type="entry name" value="ACAP1/2/3-like"/>
</dbReference>
<dbReference type="InterPro" id="IPR035670">
    <property type="entry name" value="AGD1/2/3/4_BAR_plant"/>
</dbReference>
<dbReference type="InterPro" id="IPR027267">
    <property type="entry name" value="AH/BAR_dom_sf"/>
</dbReference>
<dbReference type="InterPro" id="IPR002110">
    <property type="entry name" value="Ankyrin_rpt"/>
</dbReference>
<dbReference type="InterPro" id="IPR036770">
    <property type="entry name" value="Ankyrin_rpt-contain_sf"/>
</dbReference>
<dbReference type="InterPro" id="IPR037278">
    <property type="entry name" value="ARFGAP/RecO"/>
</dbReference>
<dbReference type="InterPro" id="IPR001164">
    <property type="entry name" value="ArfGAP_dom"/>
</dbReference>
<dbReference type="InterPro" id="IPR038508">
    <property type="entry name" value="ArfGAP_dom_sf"/>
</dbReference>
<dbReference type="InterPro" id="IPR004148">
    <property type="entry name" value="BAR_dom"/>
</dbReference>
<dbReference type="InterPro" id="IPR011993">
    <property type="entry name" value="PH-like_dom_sf"/>
</dbReference>
<dbReference type="InterPro" id="IPR001849">
    <property type="entry name" value="PH_domain"/>
</dbReference>
<dbReference type="PANTHER" id="PTHR23180:SF405">
    <property type="entry name" value="ADP-RIBOSYLATION FACTOR GTPASE-ACTIVATING PROTEIN AGD1"/>
    <property type="match status" value="1"/>
</dbReference>
<dbReference type="PANTHER" id="PTHR23180">
    <property type="entry name" value="CENTAURIN/ARF"/>
    <property type="match status" value="1"/>
</dbReference>
<dbReference type="Pfam" id="PF12796">
    <property type="entry name" value="Ank_2"/>
    <property type="match status" value="1"/>
</dbReference>
<dbReference type="Pfam" id="PF01412">
    <property type="entry name" value="ArfGap"/>
    <property type="match status" value="1"/>
</dbReference>
<dbReference type="Pfam" id="PF16746">
    <property type="entry name" value="BAR_3"/>
    <property type="match status" value="1"/>
</dbReference>
<dbReference type="Pfam" id="PF00169">
    <property type="entry name" value="PH"/>
    <property type="match status" value="1"/>
</dbReference>
<dbReference type="PRINTS" id="PR00405">
    <property type="entry name" value="REVINTRACTNG"/>
</dbReference>
<dbReference type="SMART" id="SM00248">
    <property type="entry name" value="ANK"/>
    <property type="match status" value="2"/>
</dbReference>
<dbReference type="SMART" id="SM00105">
    <property type="entry name" value="ArfGap"/>
    <property type="match status" value="1"/>
</dbReference>
<dbReference type="SMART" id="SM00721">
    <property type="entry name" value="BAR"/>
    <property type="match status" value="1"/>
</dbReference>
<dbReference type="SMART" id="SM00233">
    <property type="entry name" value="PH"/>
    <property type="match status" value="1"/>
</dbReference>
<dbReference type="SUPFAM" id="SSF48403">
    <property type="entry name" value="Ankyrin repeat"/>
    <property type="match status" value="1"/>
</dbReference>
<dbReference type="SUPFAM" id="SSF57863">
    <property type="entry name" value="ArfGap/RecO-like zinc finger"/>
    <property type="match status" value="1"/>
</dbReference>
<dbReference type="SUPFAM" id="SSF103657">
    <property type="entry name" value="BAR/IMD domain-like"/>
    <property type="match status" value="1"/>
</dbReference>
<dbReference type="SUPFAM" id="SSF50729">
    <property type="entry name" value="PH domain-like"/>
    <property type="match status" value="1"/>
</dbReference>
<dbReference type="PROSITE" id="PS50297">
    <property type="entry name" value="ANK_REP_REGION"/>
    <property type="match status" value="1"/>
</dbReference>
<dbReference type="PROSITE" id="PS50088">
    <property type="entry name" value="ANK_REPEAT"/>
    <property type="match status" value="2"/>
</dbReference>
<dbReference type="PROSITE" id="PS50115">
    <property type="entry name" value="ARFGAP"/>
    <property type="match status" value="1"/>
</dbReference>
<dbReference type="PROSITE" id="PS50003">
    <property type="entry name" value="PH_DOMAIN"/>
    <property type="match status" value="1"/>
</dbReference>
<name>AGD1_ARATH</name>
<feature type="chain" id="PRO_0000352495" description="ADP-ribosylation factor GTPase-activating protein AGD1">
    <location>
        <begin position="1"/>
        <end position="828"/>
    </location>
</feature>
<feature type="domain" description="BAR">
    <location>
        <begin position="1"/>
        <end position="225"/>
    </location>
</feature>
<feature type="domain" description="PH" evidence="4">
    <location>
        <begin position="288"/>
        <end position="425"/>
    </location>
</feature>
<feature type="domain" description="Arf-GAP" evidence="5">
    <location>
        <begin position="498"/>
        <end position="643"/>
    </location>
</feature>
<feature type="repeat" description="ANK 1">
    <location>
        <begin position="735"/>
        <end position="764"/>
    </location>
</feature>
<feature type="repeat" description="ANK 2">
    <location>
        <begin position="768"/>
        <end position="797"/>
    </location>
</feature>
<feature type="zinc finger region" description="C4-type" evidence="5">
    <location>
        <begin position="513"/>
        <end position="536"/>
    </location>
</feature>
<feature type="region of interest" description="Disordered" evidence="6">
    <location>
        <begin position="247"/>
        <end position="268"/>
    </location>
</feature>
<feature type="region of interest" description="Disordered" evidence="6">
    <location>
        <begin position="590"/>
        <end position="611"/>
    </location>
</feature>
<feature type="coiled-coil region" evidence="3">
    <location>
        <begin position="225"/>
        <end position="255"/>
    </location>
</feature>
<feature type="compositionally biased region" description="Low complexity" evidence="6">
    <location>
        <begin position="590"/>
        <end position="600"/>
    </location>
</feature>
<feature type="modified residue" description="Phosphoserine" evidence="2">
    <location>
        <position position="441"/>
    </location>
</feature>